<name>KPRS_BRADU</name>
<evidence type="ECO:0000255" key="1">
    <source>
        <dbReference type="HAMAP-Rule" id="MF_00583"/>
    </source>
</evidence>
<evidence type="ECO:0000305" key="2"/>
<keyword id="KW-0067">ATP-binding</keyword>
<keyword id="KW-0963">Cytoplasm</keyword>
<keyword id="KW-0418">Kinase</keyword>
<keyword id="KW-0460">Magnesium</keyword>
<keyword id="KW-0479">Metal-binding</keyword>
<keyword id="KW-0545">Nucleotide biosynthesis</keyword>
<keyword id="KW-0547">Nucleotide-binding</keyword>
<keyword id="KW-1185">Reference proteome</keyword>
<keyword id="KW-0808">Transferase</keyword>
<reference key="1">
    <citation type="journal article" date="2002" name="DNA Res.">
        <title>Complete genomic sequence of nitrogen-fixing symbiotic bacterium Bradyrhizobium japonicum USDA110.</title>
        <authorList>
            <person name="Kaneko T."/>
            <person name="Nakamura Y."/>
            <person name="Sato S."/>
            <person name="Minamisawa K."/>
            <person name="Uchiumi T."/>
            <person name="Sasamoto S."/>
            <person name="Watanabe A."/>
            <person name="Idesawa K."/>
            <person name="Iriguchi M."/>
            <person name="Kawashima K."/>
            <person name="Kohara M."/>
            <person name="Matsumoto M."/>
            <person name="Shimpo S."/>
            <person name="Tsuruoka H."/>
            <person name="Wada T."/>
            <person name="Yamada M."/>
            <person name="Tabata S."/>
        </authorList>
    </citation>
    <scope>NUCLEOTIDE SEQUENCE [LARGE SCALE GENOMIC DNA]</scope>
    <source>
        <strain>JCM 10833 / BCRC 13528 / IAM 13628 / NBRC 14792 / USDA 110</strain>
    </source>
</reference>
<sequence>MSAKNGSIKLVAGNSNPALAQAIAQGLHLPLTKAVVRRFADMEIFVEIQENVRGSDAFIIQSTSFPANDHLMELLIITDALRRSSARRITAVLPYFGYARQDRKSGSRTPISAKLVANLITQAGVDRVMTLDLHAGQIQGFFDIPTDNLYAAPLMVRDIKDKFDLSKTMVISPDVGGVARARGLAKRINTPLAIVDKRRERPGESEVMNVIGDVAGYTCILVDDIVDSGGTLVNAADALIAKGAKDVYAYITHGVLSGGAAARITNSKLKELVITDSILPTDAVSKAPNIRTLPIASLISDAIARTAAEESVSSLFD</sequence>
<protein>
    <recommendedName>
        <fullName evidence="1">Ribose-phosphate pyrophosphokinase</fullName>
        <shortName evidence="1">RPPK</shortName>
        <ecNumber evidence="1">2.7.6.1</ecNumber>
    </recommendedName>
    <alternativeName>
        <fullName evidence="1">5-phospho-D-ribosyl alpha-1-diphosphate synthase</fullName>
    </alternativeName>
    <alternativeName>
        <fullName evidence="1">Phosphoribosyl diphosphate synthase</fullName>
    </alternativeName>
    <alternativeName>
        <fullName evidence="1">Phosphoribosyl pyrophosphate synthase</fullName>
        <shortName evidence="1">P-Rib-PP synthase</shortName>
        <shortName evidence="1">PRPP synthase</shortName>
        <shortName evidence="1">PRPPase</shortName>
    </alternativeName>
</protein>
<dbReference type="EC" id="2.7.6.1" evidence="1"/>
<dbReference type="EMBL" id="BA000040">
    <property type="protein sequence ID" value="BAC52713.1"/>
    <property type="status" value="ALT_INIT"/>
    <property type="molecule type" value="Genomic_DNA"/>
</dbReference>
<dbReference type="RefSeq" id="NP_774088.1">
    <property type="nucleotide sequence ID" value="NC_004463.1"/>
</dbReference>
<dbReference type="RefSeq" id="WP_028174674.1">
    <property type="nucleotide sequence ID" value="NC_004463.1"/>
</dbReference>
<dbReference type="SMR" id="Q89DJ1"/>
<dbReference type="FunCoup" id="Q89DJ1">
    <property type="interactions" value="845"/>
</dbReference>
<dbReference type="STRING" id="224911.AAV28_34930"/>
<dbReference type="EnsemblBacteria" id="BAC52713">
    <property type="protein sequence ID" value="BAC52713"/>
    <property type="gene ID" value="BAC52713"/>
</dbReference>
<dbReference type="GeneID" id="46494406"/>
<dbReference type="KEGG" id="bja:blr7448"/>
<dbReference type="PATRIC" id="fig|224911.44.peg.7547"/>
<dbReference type="eggNOG" id="COG0462">
    <property type="taxonomic scope" value="Bacteria"/>
</dbReference>
<dbReference type="HOGENOM" id="CLU_033546_1_0_5"/>
<dbReference type="InParanoid" id="Q89DJ1"/>
<dbReference type="OrthoDB" id="9777067at2"/>
<dbReference type="UniPathway" id="UPA00087">
    <property type="reaction ID" value="UER00172"/>
</dbReference>
<dbReference type="Proteomes" id="UP000002526">
    <property type="component" value="Chromosome"/>
</dbReference>
<dbReference type="GO" id="GO:0005737">
    <property type="term" value="C:cytoplasm"/>
    <property type="evidence" value="ECO:0000318"/>
    <property type="project" value="GO_Central"/>
</dbReference>
<dbReference type="GO" id="GO:0002189">
    <property type="term" value="C:ribose phosphate diphosphokinase complex"/>
    <property type="evidence" value="ECO:0000318"/>
    <property type="project" value="GO_Central"/>
</dbReference>
<dbReference type="GO" id="GO:0005524">
    <property type="term" value="F:ATP binding"/>
    <property type="evidence" value="ECO:0007669"/>
    <property type="project" value="UniProtKB-KW"/>
</dbReference>
<dbReference type="GO" id="GO:0016301">
    <property type="term" value="F:kinase activity"/>
    <property type="evidence" value="ECO:0007669"/>
    <property type="project" value="UniProtKB-KW"/>
</dbReference>
<dbReference type="GO" id="GO:0000287">
    <property type="term" value="F:magnesium ion binding"/>
    <property type="evidence" value="ECO:0007669"/>
    <property type="project" value="UniProtKB-UniRule"/>
</dbReference>
<dbReference type="GO" id="GO:0004749">
    <property type="term" value="F:ribose phosphate diphosphokinase activity"/>
    <property type="evidence" value="ECO:0000318"/>
    <property type="project" value="GO_Central"/>
</dbReference>
<dbReference type="GO" id="GO:0006015">
    <property type="term" value="P:5-phosphoribose 1-diphosphate biosynthetic process"/>
    <property type="evidence" value="ECO:0000318"/>
    <property type="project" value="GO_Central"/>
</dbReference>
<dbReference type="GO" id="GO:0006164">
    <property type="term" value="P:purine nucleotide biosynthetic process"/>
    <property type="evidence" value="ECO:0000318"/>
    <property type="project" value="GO_Central"/>
</dbReference>
<dbReference type="GO" id="GO:0009156">
    <property type="term" value="P:ribonucleoside monophosphate biosynthetic process"/>
    <property type="evidence" value="ECO:0007669"/>
    <property type="project" value="InterPro"/>
</dbReference>
<dbReference type="CDD" id="cd06223">
    <property type="entry name" value="PRTases_typeI"/>
    <property type="match status" value="1"/>
</dbReference>
<dbReference type="FunFam" id="3.40.50.2020:FF:000001">
    <property type="entry name" value="Ribose-phosphate pyrophosphokinase"/>
    <property type="match status" value="1"/>
</dbReference>
<dbReference type="Gene3D" id="3.40.50.2020">
    <property type="match status" value="2"/>
</dbReference>
<dbReference type="HAMAP" id="MF_00583_B">
    <property type="entry name" value="RibP_PPkinase_B"/>
    <property type="match status" value="1"/>
</dbReference>
<dbReference type="InterPro" id="IPR000842">
    <property type="entry name" value="PRib_PP_synth_CS"/>
</dbReference>
<dbReference type="InterPro" id="IPR029099">
    <property type="entry name" value="Pribosyltran_N"/>
</dbReference>
<dbReference type="InterPro" id="IPR000836">
    <property type="entry name" value="PRibTrfase_dom"/>
</dbReference>
<dbReference type="InterPro" id="IPR029057">
    <property type="entry name" value="PRTase-like"/>
</dbReference>
<dbReference type="InterPro" id="IPR005946">
    <property type="entry name" value="Rib-P_diPkinase"/>
</dbReference>
<dbReference type="InterPro" id="IPR037515">
    <property type="entry name" value="Rib-P_diPkinase_bac"/>
</dbReference>
<dbReference type="NCBIfam" id="NF002320">
    <property type="entry name" value="PRK01259.1"/>
    <property type="match status" value="1"/>
</dbReference>
<dbReference type="NCBIfam" id="TIGR01251">
    <property type="entry name" value="ribP_PPkin"/>
    <property type="match status" value="1"/>
</dbReference>
<dbReference type="PANTHER" id="PTHR10210">
    <property type="entry name" value="RIBOSE-PHOSPHATE DIPHOSPHOKINASE FAMILY MEMBER"/>
    <property type="match status" value="1"/>
</dbReference>
<dbReference type="PANTHER" id="PTHR10210:SF41">
    <property type="entry name" value="RIBOSE-PHOSPHATE PYROPHOSPHOKINASE 1, CHLOROPLASTIC"/>
    <property type="match status" value="1"/>
</dbReference>
<dbReference type="Pfam" id="PF14572">
    <property type="entry name" value="Pribosyl_synth"/>
    <property type="match status" value="1"/>
</dbReference>
<dbReference type="Pfam" id="PF13793">
    <property type="entry name" value="Pribosyltran_N"/>
    <property type="match status" value="1"/>
</dbReference>
<dbReference type="SMART" id="SM01400">
    <property type="entry name" value="Pribosyltran_N"/>
    <property type="match status" value="1"/>
</dbReference>
<dbReference type="SUPFAM" id="SSF53271">
    <property type="entry name" value="PRTase-like"/>
    <property type="match status" value="1"/>
</dbReference>
<dbReference type="PROSITE" id="PS00114">
    <property type="entry name" value="PRPP_SYNTHASE"/>
    <property type="match status" value="1"/>
</dbReference>
<feature type="chain" id="PRO_0000141115" description="Ribose-phosphate pyrophosphokinase">
    <location>
        <begin position="1"/>
        <end position="317"/>
    </location>
</feature>
<feature type="active site" evidence="1">
    <location>
        <position position="197"/>
    </location>
</feature>
<feature type="binding site" evidence="1">
    <location>
        <begin position="41"/>
        <end position="43"/>
    </location>
    <ligand>
        <name>ATP</name>
        <dbReference type="ChEBI" id="CHEBI:30616"/>
    </ligand>
</feature>
<feature type="binding site" evidence="1">
    <location>
        <begin position="100"/>
        <end position="101"/>
    </location>
    <ligand>
        <name>ATP</name>
        <dbReference type="ChEBI" id="CHEBI:30616"/>
    </ligand>
</feature>
<feature type="binding site" evidence="1">
    <location>
        <position position="134"/>
    </location>
    <ligand>
        <name>Mg(2+)</name>
        <dbReference type="ChEBI" id="CHEBI:18420"/>
        <label>1</label>
    </ligand>
</feature>
<feature type="binding site" evidence="1">
    <location>
        <position position="174"/>
    </location>
    <ligand>
        <name>Mg(2+)</name>
        <dbReference type="ChEBI" id="CHEBI:18420"/>
        <label>2</label>
    </ligand>
</feature>
<feature type="binding site" evidence="1">
    <location>
        <position position="199"/>
    </location>
    <ligand>
        <name>D-ribose 5-phosphate</name>
        <dbReference type="ChEBI" id="CHEBI:78346"/>
    </ligand>
</feature>
<feature type="binding site" evidence="1">
    <location>
        <position position="223"/>
    </location>
    <ligand>
        <name>D-ribose 5-phosphate</name>
        <dbReference type="ChEBI" id="CHEBI:78346"/>
    </ligand>
</feature>
<feature type="binding site" evidence="1">
    <location>
        <begin position="227"/>
        <end position="231"/>
    </location>
    <ligand>
        <name>D-ribose 5-phosphate</name>
        <dbReference type="ChEBI" id="CHEBI:78346"/>
    </ligand>
</feature>
<proteinExistence type="inferred from homology"/>
<comment type="function">
    <text evidence="1">Involved in the biosynthesis of the central metabolite phospho-alpha-D-ribosyl-1-pyrophosphate (PRPP) via the transfer of pyrophosphoryl group from ATP to 1-hydroxyl of ribose-5-phosphate (Rib-5-P).</text>
</comment>
<comment type="catalytic activity">
    <reaction evidence="1">
        <text>D-ribose 5-phosphate + ATP = 5-phospho-alpha-D-ribose 1-diphosphate + AMP + H(+)</text>
        <dbReference type="Rhea" id="RHEA:15609"/>
        <dbReference type="ChEBI" id="CHEBI:15378"/>
        <dbReference type="ChEBI" id="CHEBI:30616"/>
        <dbReference type="ChEBI" id="CHEBI:58017"/>
        <dbReference type="ChEBI" id="CHEBI:78346"/>
        <dbReference type="ChEBI" id="CHEBI:456215"/>
        <dbReference type="EC" id="2.7.6.1"/>
    </reaction>
</comment>
<comment type="cofactor">
    <cofactor evidence="1">
        <name>Mg(2+)</name>
        <dbReference type="ChEBI" id="CHEBI:18420"/>
    </cofactor>
    <text evidence="1">Binds 2 Mg(2+) ions per subunit.</text>
</comment>
<comment type="pathway">
    <text evidence="1">Metabolic intermediate biosynthesis; 5-phospho-alpha-D-ribose 1-diphosphate biosynthesis; 5-phospho-alpha-D-ribose 1-diphosphate from D-ribose 5-phosphate (route I): step 1/1.</text>
</comment>
<comment type="subunit">
    <text evidence="1">Homohexamer.</text>
</comment>
<comment type="subcellular location">
    <subcellularLocation>
        <location evidence="1">Cytoplasm</location>
    </subcellularLocation>
</comment>
<comment type="similarity">
    <text evidence="1">Belongs to the ribose-phosphate pyrophosphokinase family. Class I subfamily.</text>
</comment>
<comment type="sequence caution" evidence="2">
    <conflict type="erroneous initiation">
        <sequence resource="EMBL-CDS" id="BAC52713"/>
    </conflict>
    <text>Extended N-terminus.</text>
</comment>
<accession>Q89DJ1</accession>
<gene>
    <name evidence="1" type="primary">prs</name>
    <name type="synonym">prsA</name>
    <name type="ordered locus">blr7448</name>
</gene>
<organism>
    <name type="scientific">Bradyrhizobium diazoefficiens (strain JCM 10833 / BCRC 13528 / IAM 13628 / NBRC 14792 / USDA 110)</name>
    <dbReference type="NCBI Taxonomy" id="224911"/>
    <lineage>
        <taxon>Bacteria</taxon>
        <taxon>Pseudomonadati</taxon>
        <taxon>Pseudomonadota</taxon>
        <taxon>Alphaproteobacteria</taxon>
        <taxon>Hyphomicrobiales</taxon>
        <taxon>Nitrobacteraceae</taxon>
        <taxon>Bradyrhizobium</taxon>
    </lineage>
</organism>